<name>ADH_STAES</name>
<organism>
    <name type="scientific">Staphylococcus epidermidis (strain ATCC 12228 / FDA PCI 1200)</name>
    <dbReference type="NCBI Taxonomy" id="176280"/>
    <lineage>
        <taxon>Bacteria</taxon>
        <taxon>Bacillati</taxon>
        <taxon>Bacillota</taxon>
        <taxon>Bacilli</taxon>
        <taxon>Bacillales</taxon>
        <taxon>Staphylococcaceae</taxon>
        <taxon>Staphylococcus</taxon>
    </lineage>
</organism>
<gene>
    <name type="primary">adh</name>
    <name type="ordered locus">SE_0375</name>
</gene>
<protein>
    <recommendedName>
        <fullName>Alcohol dehydrogenase</fullName>
        <shortName>ADH</shortName>
        <ecNumber>1.1.1.1</ecNumber>
    </recommendedName>
</protein>
<evidence type="ECO:0000250" key="1"/>
<evidence type="ECO:0000305" key="2"/>
<sequence length="340" mass="36520">MKAAVVTKDHRVSIEEKRLRELRPGEALVKTEYCGVCHTDLHVKNADFGDVTGVTLGHEGIGRVIKIADNVDSLKVGDRVSIAWMYAACGNCEYCTTGRETLCRDVLNAGYTVDGAMAEEVIVDANYAVKVPENLDPAAASSITCAGVTTYKAVKVSGIEPGQWLGVFGVGGLGNLALQYAKNVMGAKVVAFDINDDKLNFAKELGADAIINSTNVDPIEEVNRLTNNKGLDATVITAVAKTPFNQAVDVVKAGARVVAVGLPVDKMDLDIPRLVLDGIEVVGSLVGTRQDLREAFQFAAENKVIPKIQLRQLSEINDIFDEMEKGTITGRMVIDMKSTH</sequence>
<dbReference type="EC" id="1.1.1.1"/>
<dbReference type="EMBL" id="AE015929">
    <property type="protein sequence ID" value="AAO03972.1"/>
    <property type="molecule type" value="Genomic_DNA"/>
</dbReference>
<dbReference type="RefSeq" id="NP_763930.1">
    <property type="nucleotide sequence ID" value="NC_004461.1"/>
</dbReference>
<dbReference type="SMR" id="Q8CQ56"/>
<dbReference type="KEGG" id="sep:SE_0375"/>
<dbReference type="PATRIC" id="fig|176280.10.peg.350"/>
<dbReference type="eggNOG" id="COG1064">
    <property type="taxonomic scope" value="Bacteria"/>
</dbReference>
<dbReference type="HOGENOM" id="CLU_026673_20_1_9"/>
<dbReference type="OrthoDB" id="9806940at2"/>
<dbReference type="Proteomes" id="UP000001411">
    <property type="component" value="Chromosome"/>
</dbReference>
<dbReference type="GO" id="GO:0004022">
    <property type="term" value="F:alcohol dehydrogenase (NAD+) activity"/>
    <property type="evidence" value="ECO:0007669"/>
    <property type="project" value="UniProtKB-EC"/>
</dbReference>
<dbReference type="GO" id="GO:0008270">
    <property type="term" value="F:zinc ion binding"/>
    <property type="evidence" value="ECO:0007669"/>
    <property type="project" value="InterPro"/>
</dbReference>
<dbReference type="CDD" id="cd08297">
    <property type="entry name" value="CAD3"/>
    <property type="match status" value="1"/>
</dbReference>
<dbReference type="FunFam" id="3.40.50.720:FF:000039">
    <property type="entry name" value="Alcohol dehydrogenase AdhP"/>
    <property type="match status" value="1"/>
</dbReference>
<dbReference type="Gene3D" id="3.90.180.10">
    <property type="entry name" value="Medium-chain alcohol dehydrogenases, catalytic domain"/>
    <property type="match status" value="1"/>
</dbReference>
<dbReference type="Gene3D" id="3.40.50.720">
    <property type="entry name" value="NAD(P)-binding Rossmann-like Domain"/>
    <property type="match status" value="1"/>
</dbReference>
<dbReference type="InterPro" id="IPR013149">
    <property type="entry name" value="ADH-like_C"/>
</dbReference>
<dbReference type="InterPro" id="IPR013154">
    <property type="entry name" value="ADH-like_N"/>
</dbReference>
<dbReference type="InterPro" id="IPR002328">
    <property type="entry name" value="ADH_Zn_CS"/>
</dbReference>
<dbReference type="InterPro" id="IPR029752">
    <property type="entry name" value="D-isomer_DH_CS1"/>
</dbReference>
<dbReference type="InterPro" id="IPR011032">
    <property type="entry name" value="GroES-like_sf"/>
</dbReference>
<dbReference type="InterPro" id="IPR036291">
    <property type="entry name" value="NAD(P)-bd_dom_sf"/>
</dbReference>
<dbReference type="InterPro" id="IPR020843">
    <property type="entry name" value="PKS_ER"/>
</dbReference>
<dbReference type="NCBIfam" id="NF006940">
    <property type="entry name" value="PRK09422.1"/>
    <property type="match status" value="1"/>
</dbReference>
<dbReference type="PANTHER" id="PTHR42940">
    <property type="entry name" value="ALCOHOL DEHYDROGENASE 1-RELATED"/>
    <property type="match status" value="1"/>
</dbReference>
<dbReference type="PANTHER" id="PTHR42940:SF8">
    <property type="entry name" value="VACUOLAR PROTEIN SORTING-ASSOCIATED PROTEIN 11"/>
    <property type="match status" value="1"/>
</dbReference>
<dbReference type="Pfam" id="PF08240">
    <property type="entry name" value="ADH_N"/>
    <property type="match status" value="1"/>
</dbReference>
<dbReference type="Pfam" id="PF00107">
    <property type="entry name" value="ADH_zinc_N"/>
    <property type="match status" value="1"/>
</dbReference>
<dbReference type="SMART" id="SM00829">
    <property type="entry name" value="PKS_ER"/>
    <property type="match status" value="1"/>
</dbReference>
<dbReference type="SUPFAM" id="SSF50129">
    <property type="entry name" value="GroES-like"/>
    <property type="match status" value="1"/>
</dbReference>
<dbReference type="SUPFAM" id="SSF51735">
    <property type="entry name" value="NAD(P)-binding Rossmann-fold domains"/>
    <property type="match status" value="1"/>
</dbReference>
<dbReference type="PROSITE" id="PS00059">
    <property type="entry name" value="ADH_ZINC"/>
    <property type="match status" value="1"/>
</dbReference>
<proteinExistence type="inferred from homology"/>
<keyword id="KW-0479">Metal-binding</keyword>
<keyword id="KW-0520">NAD</keyword>
<keyword id="KW-0560">Oxidoreductase</keyword>
<keyword id="KW-0862">Zinc</keyword>
<comment type="catalytic activity">
    <reaction>
        <text>a primary alcohol + NAD(+) = an aldehyde + NADH + H(+)</text>
        <dbReference type="Rhea" id="RHEA:10736"/>
        <dbReference type="ChEBI" id="CHEBI:15378"/>
        <dbReference type="ChEBI" id="CHEBI:15734"/>
        <dbReference type="ChEBI" id="CHEBI:17478"/>
        <dbReference type="ChEBI" id="CHEBI:57540"/>
        <dbReference type="ChEBI" id="CHEBI:57945"/>
        <dbReference type="EC" id="1.1.1.1"/>
    </reaction>
</comment>
<comment type="catalytic activity">
    <reaction>
        <text>a secondary alcohol + NAD(+) = a ketone + NADH + H(+)</text>
        <dbReference type="Rhea" id="RHEA:10740"/>
        <dbReference type="ChEBI" id="CHEBI:15378"/>
        <dbReference type="ChEBI" id="CHEBI:17087"/>
        <dbReference type="ChEBI" id="CHEBI:35681"/>
        <dbReference type="ChEBI" id="CHEBI:57540"/>
        <dbReference type="ChEBI" id="CHEBI:57945"/>
        <dbReference type="EC" id="1.1.1.1"/>
    </reaction>
</comment>
<comment type="cofactor">
    <cofactor evidence="1">
        <name>Zn(2+)</name>
        <dbReference type="ChEBI" id="CHEBI:29105"/>
    </cofactor>
    <text evidence="1">Binds 2 Zn(2+) ions per subunit.</text>
</comment>
<comment type="similarity">
    <text evidence="2">Belongs to the zinc-containing alcohol dehydrogenase family.</text>
</comment>
<accession>Q8CQ56</accession>
<feature type="chain" id="PRO_0000273042" description="Alcohol dehydrogenase">
    <location>
        <begin position="1"/>
        <end position="340"/>
    </location>
</feature>
<feature type="binding site" evidence="1">
    <location>
        <position position="37"/>
    </location>
    <ligand>
        <name>Zn(2+)</name>
        <dbReference type="ChEBI" id="CHEBI:29105"/>
        <label>1</label>
        <note>catalytic</note>
    </ligand>
</feature>
<feature type="binding site" evidence="1">
    <location>
        <position position="58"/>
    </location>
    <ligand>
        <name>Zn(2+)</name>
        <dbReference type="ChEBI" id="CHEBI:29105"/>
        <label>1</label>
        <note>catalytic</note>
    </ligand>
</feature>
<feature type="binding site" evidence="1">
    <location>
        <position position="89"/>
    </location>
    <ligand>
        <name>Zn(2+)</name>
        <dbReference type="ChEBI" id="CHEBI:29105"/>
        <label>2</label>
    </ligand>
</feature>
<feature type="binding site" evidence="1">
    <location>
        <position position="92"/>
    </location>
    <ligand>
        <name>Zn(2+)</name>
        <dbReference type="ChEBI" id="CHEBI:29105"/>
        <label>2</label>
    </ligand>
</feature>
<feature type="binding site" evidence="1">
    <location>
        <position position="95"/>
    </location>
    <ligand>
        <name>Zn(2+)</name>
        <dbReference type="ChEBI" id="CHEBI:29105"/>
        <label>2</label>
    </ligand>
</feature>
<feature type="binding site" evidence="1">
    <location>
        <position position="103"/>
    </location>
    <ligand>
        <name>Zn(2+)</name>
        <dbReference type="ChEBI" id="CHEBI:29105"/>
        <label>2</label>
    </ligand>
</feature>
<feature type="binding site" evidence="1">
    <location>
        <position position="145"/>
    </location>
    <ligand>
        <name>Zn(2+)</name>
        <dbReference type="ChEBI" id="CHEBI:29105"/>
        <label>1</label>
        <note>catalytic</note>
    </ligand>
</feature>
<reference key="1">
    <citation type="journal article" date="2003" name="Mol. Microbiol.">
        <title>Genome-based analysis of virulence genes in a non-biofilm-forming Staphylococcus epidermidis strain (ATCC 12228).</title>
        <authorList>
            <person name="Zhang Y.-Q."/>
            <person name="Ren S.-X."/>
            <person name="Li H.-L."/>
            <person name="Wang Y.-X."/>
            <person name="Fu G."/>
            <person name="Yang J."/>
            <person name="Qin Z.-Q."/>
            <person name="Miao Y.-G."/>
            <person name="Wang W.-Y."/>
            <person name="Chen R.-S."/>
            <person name="Shen Y."/>
            <person name="Chen Z."/>
            <person name="Yuan Z.-H."/>
            <person name="Zhao G.-P."/>
            <person name="Qu D."/>
            <person name="Danchin A."/>
            <person name="Wen Y.-M."/>
        </authorList>
    </citation>
    <scope>NUCLEOTIDE SEQUENCE [LARGE SCALE GENOMIC DNA]</scope>
    <source>
        <strain>ATCC 12228 / FDA PCI 1200</strain>
    </source>
</reference>